<reference key="1">
    <citation type="journal article" date="2007" name="PLoS Genet.">
        <title>Patterns and implications of gene gain and loss in the evolution of Prochlorococcus.</title>
        <authorList>
            <person name="Kettler G.C."/>
            <person name="Martiny A.C."/>
            <person name="Huang K."/>
            <person name="Zucker J."/>
            <person name="Coleman M.L."/>
            <person name="Rodrigue S."/>
            <person name="Chen F."/>
            <person name="Lapidus A."/>
            <person name="Ferriera S."/>
            <person name="Johnson J."/>
            <person name="Steglich C."/>
            <person name="Church G.M."/>
            <person name="Richardson P."/>
            <person name="Chisholm S.W."/>
        </authorList>
    </citation>
    <scope>NUCLEOTIDE SEQUENCE [LARGE SCALE GENOMIC DNA]</scope>
    <source>
        <strain>NATL1A</strain>
    </source>
</reference>
<comment type="function">
    <text evidence="1">Catalyzes the NADPH-dependent reduction of glutamyl-tRNA(Glu) to glutamate 1-semialdehyde (GSA).</text>
</comment>
<comment type="catalytic activity">
    <reaction evidence="1">
        <text>(S)-4-amino-5-oxopentanoate + tRNA(Glu) + NADP(+) = L-glutamyl-tRNA(Glu) + NADPH + H(+)</text>
        <dbReference type="Rhea" id="RHEA:12344"/>
        <dbReference type="Rhea" id="RHEA-COMP:9663"/>
        <dbReference type="Rhea" id="RHEA-COMP:9680"/>
        <dbReference type="ChEBI" id="CHEBI:15378"/>
        <dbReference type="ChEBI" id="CHEBI:57501"/>
        <dbReference type="ChEBI" id="CHEBI:57783"/>
        <dbReference type="ChEBI" id="CHEBI:58349"/>
        <dbReference type="ChEBI" id="CHEBI:78442"/>
        <dbReference type="ChEBI" id="CHEBI:78520"/>
        <dbReference type="EC" id="1.2.1.70"/>
    </reaction>
</comment>
<comment type="pathway">
    <text evidence="1">Porphyrin-containing compound metabolism; protoporphyrin-IX biosynthesis; 5-aminolevulinate from L-glutamyl-tRNA(Glu): step 1/2.</text>
</comment>
<comment type="pathway">
    <text evidence="1">Porphyrin-containing compound metabolism; chlorophyll biosynthesis.</text>
</comment>
<comment type="subunit">
    <text evidence="1">Homodimer.</text>
</comment>
<comment type="domain">
    <text evidence="1">Possesses an unusual extended V-shaped dimeric structure with each monomer consisting of three distinct domains arranged along a curved 'spinal' alpha-helix. The N-terminal catalytic domain specifically recognizes the glutamate moiety of the substrate. The second domain is the NADPH-binding domain, and the third C-terminal domain is responsible for dimerization.</text>
</comment>
<comment type="miscellaneous">
    <text evidence="1">During catalysis, the active site Cys acts as a nucleophile attacking the alpha-carbonyl group of tRNA-bound glutamate with the formation of a thioester intermediate between enzyme and glutamate, and the concomitant release of tRNA(Glu). The thioester intermediate is finally reduced by direct hydride transfer from NADPH, to form the product GSA.</text>
</comment>
<comment type="similarity">
    <text evidence="1">Belongs to the glutamyl-tRNA reductase family.</text>
</comment>
<accession>A2C1K4</accession>
<feature type="chain" id="PRO_1000004662" description="Glutamyl-tRNA reductase">
    <location>
        <begin position="1"/>
        <end position="441"/>
    </location>
</feature>
<feature type="active site" description="Nucleophile" evidence="1">
    <location>
        <position position="50"/>
    </location>
</feature>
<feature type="binding site" evidence="1">
    <location>
        <begin position="49"/>
        <end position="52"/>
    </location>
    <ligand>
        <name>substrate</name>
    </ligand>
</feature>
<feature type="binding site" evidence="1">
    <location>
        <position position="109"/>
    </location>
    <ligand>
        <name>substrate</name>
    </ligand>
</feature>
<feature type="binding site" evidence="1">
    <location>
        <begin position="114"/>
        <end position="116"/>
    </location>
    <ligand>
        <name>substrate</name>
    </ligand>
</feature>
<feature type="binding site" evidence="1">
    <location>
        <position position="120"/>
    </location>
    <ligand>
        <name>substrate</name>
    </ligand>
</feature>
<feature type="binding site" evidence="1">
    <location>
        <begin position="198"/>
        <end position="203"/>
    </location>
    <ligand>
        <name>NADP(+)</name>
        <dbReference type="ChEBI" id="CHEBI:58349"/>
    </ligand>
</feature>
<feature type="site" description="Important for activity" evidence="1">
    <location>
        <position position="99"/>
    </location>
</feature>
<proteinExistence type="inferred from homology"/>
<protein>
    <recommendedName>
        <fullName evidence="1">Glutamyl-tRNA reductase</fullName>
        <shortName evidence="1">GluTR</shortName>
        <ecNumber evidence="1">1.2.1.70</ecNumber>
    </recommendedName>
</protein>
<name>HEM1_PROM1</name>
<evidence type="ECO:0000255" key="1">
    <source>
        <dbReference type="HAMAP-Rule" id="MF_00087"/>
    </source>
</evidence>
<sequence>MHIAVVGLSHRTAPVEVREKLSIPEELVERSFNNLKKIDQILEVSILSTCNRLEIYSLVKDPQLGIEAIKSFLLEFSGLEDEILSPHLFNYVQEKAVSHVMRVSAGLDSLVLGEGQILSQVKKMVRLGQDHHSLGPILNRLLTQAVSTGKRVRSETNLGTGAVSISSAAVELAQLKLGQAHGRDQLMTLETEKVAVVGAGRMSRLLLQHLQSKGCCSLTLLNRTRKRAEDLSAAFPDIQIDCQLIDELDSCLSLSTLVFTSTAANEPIIDAEKLINIDRKPLLRLIDIGVPRNISSDAKSVSGIESHDVDDLQEVVSRNQEARQKLALEAEGLIEEECRVFLEWWDSLAAVPTINCLRSSLESIRKEELQKALSRMGPDFSARERKVVEALSKGIINKILHTPVTKLRAPQSRNDRRDSLDVIEKLFNLDVSSSLNKPKNN</sequence>
<dbReference type="EC" id="1.2.1.70" evidence="1"/>
<dbReference type="EMBL" id="CP000553">
    <property type="protein sequence ID" value="ABM75364.1"/>
    <property type="molecule type" value="Genomic_DNA"/>
</dbReference>
<dbReference type="RefSeq" id="WP_011823512.1">
    <property type="nucleotide sequence ID" value="NC_008819.1"/>
</dbReference>
<dbReference type="SMR" id="A2C1K4"/>
<dbReference type="KEGG" id="pme:NATL1_08061"/>
<dbReference type="eggNOG" id="COG0373">
    <property type="taxonomic scope" value="Bacteria"/>
</dbReference>
<dbReference type="HOGENOM" id="CLU_035113_2_1_3"/>
<dbReference type="UniPathway" id="UPA00251">
    <property type="reaction ID" value="UER00316"/>
</dbReference>
<dbReference type="UniPathway" id="UPA00668"/>
<dbReference type="Proteomes" id="UP000002592">
    <property type="component" value="Chromosome"/>
</dbReference>
<dbReference type="GO" id="GO:0008883">
    <property type="term" value="F:glutamyl-tRNA reductase activity"/>
    <property type="evidence" value="ECO:0007669"/>
    <property type="project" value="UniProtKB-UniRule"/>
</dbReference>
<dbReference type="GO" id="GO:0050661">
    <property type="term" value="F:NADP binding"/>
    <property type="evidence" value="ECO:0007669"/>
    <property type="project" value="InterPro"/>
</dbReference>
<dbReference type="GO" id="GO:0015995">
    <property type="term" value="P:chlorophyll biosynthetic process"/>
    <property type="evidence" value="ECO:0007669"/>
    <property type="project" value="UniProtKB-UniRule"/>
</dbReference>
<dbReference type="GO" id="GO:0006782">
    <property type="term" value="P:protoporphyrinogen IX biosynthetic process"/>
    <property type="evidence" value="ECO:0007669"/>
    <property type="project" value="UniProtKB-UniRule"/>
</dbReference>
<dbReference type="CDD" id="cd05213">
    <property type="entry name" value="NAD_bind_Glutamyl_tRNA_reduct"/>
    <property type="match status" value="1"/>
</dbReference>
<dbReference type="FunFam" id="3.30.460.30:FF:000001">
    <property type="entry name" value="Glutamyl-tRNA reductase"/>
    <property type="match status" value="1"/>
</dbReference>
<dbReference type="Gene3D" id="3.30.460.30">
    <property type="entry name" value="Glutamyl-tRNA reductase, N-terminal domain"/>
    <property type="match status" value="1"/>
</dbReference>
<dbReference type="Gene3D" id="3.40.50.720">
    <property type="entry name" value="NAD(P)-binding Rossmann-like Domain"/>
    <property type="match status" value="1"/>
</dbReference>
<dbReference type="HAMAP" id="MF_00087">
    <property type="entry name" value="Glu_tRNA_reductase"/>
    <property type="match status" value="1"/>
</dbReference>
<dbReference type="InterPro" id="IPR000343">
    <property type="entry name" value="4pyrrol_synth_GluRdtase"/>
</dbReference>
<dbReference type="InterPro" id="IPR015896">
    <property type="entry name" value="4pyrrol_synth_GluRdtase_dimer"/>
</dbReference>
<dbReference type="InterPro" id="IPR015895">
    <property type="entry name" value="4pyrrol_synth_GluRdtase_N"/>
</dbReference>
<dbReference type="InterPro" id="IPR018214">
    <property type="entry name" value="GluRdtase_CS"/>
</dbReference>
<dbReference type="InterPro" id="IPR036453">
    <property type="entry name" value="GluRdtase_dimer_dom_sf"/>
</dbReference>
<dbReference type="InterPro" id="IPR036343">
    <property type="entry name" value="GluRdtase_N_sf"/>
</dbReference>
<dbReference type="InterPro" id="IPR036291">
    <property type="entry name" value="NAD(P)-bd_dom_sf"/>
</dbReference>
<dbReference type="InterPro" id="IPR006151">
    <property type="entry name" value="Shikm_DH/Glu-tRNA_Rdtase"/>
</dbReference>
<dbReference type="NCBIfam" id="TIGR01035">
    <property type="entry name" value="hemA"/>
    <property type="match status" value="1"/>
</dbReference>
<dbReference type="NCBIfam" id="NF000744">
    <property type="entry name" value="PRK00045.1-3"/>
    <property type="match status" value="1"/>
</dbReference>
<dbReference type="PANTHER" id="PTHR43120">
    <property type="entry name" value="GLUTAMYL-TRNA REDUCTASE 1, CHLOROPLASTIC"/>
    <property type="match status" value="1"/>
</dbReference>
<dbReference type="PANTHER" id="PTHR43120:SF1">
    <property type="entry name" value="GLUTAMYL-TRNA REDUCTASE 1, CHLOROPLASTIC"/>
    <property type="match status" value="1"/>
</dbReference>
<dbReference type="Pfam" id="PF00745">
    <property type="entry name" value="GlutR_dimer"/>
    <property type="match status" value="1"/>
</dbReference>
<dbReference type="Pfam" id="PF05201">
    <property type="entry name" value="GlutR_N"/>
    <property type="match status" value="1"/>
</dbReference>
<dbReference type="Pfam" id="PF01488">
    <property type="entry name" value="Shikimate_DH"/>
    <property type="match status" value="1"/>
</dbReference>
<dbReference type="PIRSF" id="PIRSF000445">
    <property type="entry name" value="4pyrrol_synth_GluRdtase"/>
    <property type="match status" value="1"/>
</dbReference>
<dbReference type="SUPFAM" id="SSF69742">
    <property type="entry name" value="Glutamyl tRNA-reductase catalytic, N-terminal domain"/>
    <property type="match status" value="1"/>
</dbReference>
<dbReference type="SUPFAM" id="SSF69075">
    <property type="entry name" value="Glutamyl tRNA-reductase dimerization domain"/>
    <property type="match status" value="1"/>
</dbReference>
<dbReference type="SUPFAM" id="SSF51735">
    <property type="entry name" value="NAD(P)-binding Rossmann-fold domains"/>
    <property type="match status" value="1"/>
</dbReference>
<dbReference type="PROSITE" id="PS00747">
    <property type="entry name" value="GLUTR"/>
    <property type="match status" value="1"/>
</dbReference>
<gene>
    <name evidence="1" type="primary">hemA</name>
    <name type="ordered locus">NATL1_08061</name>
</gene>
<keyword id="KW-0149">Chlorophyll biosynthesis</keyword>
<keyword id="KW-0521">NADP</keyword>
<keyword id="KW-0560">Oxidoreductase</keyword>
<keyword id="KW-0627">Porphyrin biosynthesis</keyword>
<organism>
    <name type="scientific">Prochlorococcus marinus (strain NATL1A)</name>
    <dbReference type="NCBI Taxonomy" id="167555"/>
    <lineage>
        <taxon>Bacteria</taxon>
        <taxon>Bacillati</taxon>
        <taxon>Cyanobacteriota</taxon>
        <taxon>Cyanophyceae</taxon>
        <taxon>Synechococcales</taxon>
        <taxon>Prochlorococcaceae</taxon>
        <taxon>Prochlorococcus</taxon>
    </lineage>
</organism>